<name>PSK5_ARATH</name>
<keyword id="KW-0217">Developmental protein</keyword>
<keyword id="KW-0221">Differentiation</keyword>
<keyword id="KW-0339">Growth factor</keyword>
<keyword id="KW-1185">Reference proteome</keyword>
<keyword id="KW-0964">Secreted</keyword>
<keyword id="KW-0732">Signal</keyword>
<keyword id="KW-0765">Sulfation</keyword>
<evidence type="ECO:0000250" key="1"/>
<evidence type="ECO:0000255" key="2"/>
<evidence type="ECO:0000269" key="3">
    <source>
    </source>
</evidence>
<evidence type="ECO:0000269" key="4">
    <source>
    </source>
</evidence>
<evidence type="ECO:0000269" key="5">
    <source>
    </source>
</evidence>
<evidence type="ECO:0000305" key="6"/>
<proteinExistence type="evidence at transcript level"/>
<dbReference type="EMBL" id="AB074574">
    <property type="protein sequence ID" value="BAB72178.1"/>
    <property type="molecule type" value="Genomic_DNA"/>
</dbReference>
<dbReference type="EMBL" id="AB018108">
    <property type="protein sequence ID" value="BAB11134.1"/>
    <property type="molecule type" value="Genomic_DNA"/>
</dbReference>
<dbReference type="EMBL" id="CP002688">
    <property type="protein sequence ID" value="AED98117.1"/>
    <property type="molecule type" value="Genomic_DNA"/>
</dbReference>
<dbReference type="EMBL" id="AF325020">
    <property type="protein sequence ID" value="AAG40372.1"/>
    <property type="molecule type" value="mRNA"/>
</dbReference>
<dbReference type="EMBL" id="AY088723">
    <property type="protein sequence ID" value="AAM67041.1"/>
    <property type="molecule type" value="mRNA"/>
</dbReference>
<dbReference type="EMBL" id="BK000112">
    <property type="protein sequence ID" value="DAA00276.1"/>
    <property type="molecule type" value="mRNA"/>
</dbReference>
<dbReference type="RefSeq" id="NP_201388.1">
    <property type="nucleotide sequence ID" value="NM_125984.4"/>
</dbReference>
<dbReference type="FunCoup" id="Q9FEB4">
    <property type="interactions" value="15"/>
</dbReference>
<dbReference type="STRING" id="3702.Q9FEB4"/>
<dbReference type="PaxDb" id="3702-AT5G65870.1"/>
<dbReference type="ProteomicsDB" id="248893"/>
<dbReference type="EnsemblPlants" id="AT5G65870.1">
    <property type="protein sequence ID" value="AT5G65870.1"/>
    <property type="gene ID" value="AT5G65870"/>
</dbReference>
<dbReference type="GeneID" id="836716"/>
<dbReference type="Gramene" id="AT5G65870.1">
    <property type="protein sequence ID" value="AT5G65870.1"/>
    <property type="gene ID" value="AT5G65870"/>
</dbReference>
<dbReference type="KEGG" id="ath:AT5G65870"/>
<dbReference type="Araport" id="AT5G65870"/>
<dbReference type="TAIR" id="AT5G65870">
    <property type="gene designation" value="PSK5"/>
</dbReference>
<dbReference type="HOGENOM" id="CLU_165727_0_1_1"/>
<dbReference type="InParanoid" id="Q9FEB4"/>
<dbReference type="OMA" id="DQGEETC"/>
<dbReference type="PhylomeDB" id="Q9FEB4"/>
<dbReference type="PRO" id="PR:Q9FEB4"/>
<dbReference type="Proteomes" id="UP000006548">
    <property type="component" value="Chromosome 5"/>
</dbReference>
<dbReference type="ExpressionAtlas" id="Q9FEB4">
    <property type="expression patterns" value="baseline and differential"/>
</dbReference>
<dbReference type="GO" id="GO:0031012">
    <property type="term" value="C:extracellular matrix"/>
    <property type="evidence" value="ECO:0000250"/>
    <property type="project" value="TAIR"/>
</dbReference>
<dbReference type="GO" id="GO:0005576">
    <property type="term" value="C:extracellular region"/>
    <property type="evidence" value="ECO:0007669"/>
    <property type="project" value="UniProtKB-SubCell"/>
</dbReference>
<dbReference type="GO" id="GO:0008083">
    <property type="term" value="F:growth factor activity"/>
    <property type="evidence" value="ECO:0007669"/>
    <property type="project" value="UniProtKB-KW"/>
</dbReference>
<dbReference type="GO" id="GO:0030154">
    <property type="term" value="P:cell differentiation"/>
    <property type="evidence" value="ECO:0000250"/>
    <property type="project" value="TAIR"/>
</dbReference>
<dbReference type="GO" id="GO:0008283">
    <property type="term" value="P:cell population proliferation"/>
    <property type="evidence" value="ECO:0007669"/>
    <property type="project" value="InterPro"/>
</dbReference>
<dbReference type="InterPro" id="IPR009438">
    <property type="entry name" value="Phytosulfokine"/>
</dbReference>
<dbReference type="PANTHER" id="PTHR33285">
    <property type="entry name" value="PHYTOSULFOKINES 3"/>
    <property type="match status" value="1"/>
</dbReference>
<dbReference type="PANTHER" id="PTHR33285:SF30">
    <property type="entry name" value="PHYTOSULFOKINES 5"/>
    <property type="match status" value="1"/>
</dbReference>
<dbReference type="Pfam" id="PF06404">
    <property type="entry name" value="PSK"/>
    <property type="match status" value="1"/>
</dbReference>
<protein>
    <recommendedName>
        <fullName>Phytosulfokines 5</fullName>
        <shortName>AtPSK5</shortName>
    </recommendedName>
    <component>
        <recommendedName>
            <fullName>Phytosulfokine-alpha</fullName>
            <shortName>PSK-alpha</shortName>
            <shortName>Phytosulfokine-a</shortName>
        </recommendedName>
    </component>
    <component>
        <recommendedName>
            <fullName>Phytosulfokine-beta</fullName>
            <shortName>PSK-beta</shortName>
            <shortName>Phytosulfokine-b</shortName>
        </recommendedName>
    </component>
</protein>
<gene>
    <name type="primary">PSK5</name>
    <name type="ordered locus">At5g65870</name>
    <name type="ORF">K14B20.4</name>
</gene>
<reference key="1">
    <citation type="journal article" date="2001" name="Plant Physiol.">
        <title>Diversity of Arabidopsis genes encoding precursors for phytosulfokine, a peptide growth factor.</title>
        <authorList>
            <person name="Yang H."/>
            <person name="Matsubayashi Y."/>
            <person name="Nakamura K."/>
            <person name="Sakagami Y."/>
        </authorList>
    </citation>
    <scope>NUCLEOTIDE SEQUENCE [GENOMIC DNA]</scope>
    <source>
        <strain>cv. Columbia</strain>
    </source>
</reference>
<reference key="2">
    <citation type="journal article" date="2000" name="DNA Res.">
        <title>Structural analysis of Arabidopsis thaliana chromosome 5. X. Sequence features of the regions of 3,076,755 bp covered by sixty P1 and TAC clones.</title>
        <authorList>
            <person name="Sato S."/>
            <person name="Nakamura Y."/>
            <person name="Kaneko T."/>
            <person name="Katoh T."/>
            <person name="Asamizu E."/>
            <person name="Kotani H."/>
            <person name="Tabata S."/>
        </authorList>
    </citation>
    <scope>NUCLEOTIDE SEQUENCE [LARGE SCALE GENOMIC DNA]</scope>
    <source>
        <strain>cv. Columbia</strain>
    </source>
</reference>
<reference key="3">
    <citation type="journal article" date="2017" name="Plant J.">
        <title>Araport11: a complete reannotation of the Arabidopsis thaliana reference genome.</title>
        <authorList>
            <person name="Cheng C.Y."/>
            <person name="Krishnakumar V."/>
            <person name="Chan A.P."/>
            <person name="Thibaud-Nissen F."/>
            <person name="Schobel S."/>
            <person name="Town C.D."/>
        </authorList>
    </citation>
    <scope>GENOME REANNOTATION</scope>
    <source>
        <strain>cv. Columbia</strain>
    </source>
</reference>
<reference key="4">
    <citation type="journal article" date="2003" name="Science">
        <title>Empirical analysis of transcriptional activity in the Arabidopsis genome.</title>
        <authorList>
            <person name="Yamada K."/>
            <person name="Lim J."/>
            <person name="Dale J.M."/>
            <person name="Chen H."/>
            <person name="Shinn P."/>
            <person name="Palm C.J."/>
            <person name="Southwick A.M."/>
            <person name="Wu H.C."/>
            <person name="Kim C.J."/>
            <person name="Nguyen M."/>
            <person name="Pham P.K."/>
            <person name="Cheuk R.F."/>
            <person name="Karlin-Newmann G."/>
            <person name="Liu S.X."/>
            <person name="Lam B."/>
            <person name="Sakano H."/>
            <person name="Wu T."/>
            <person name="Yu G."/>
            <person name="Miranda M."/>
            <person name="Quach H.L."/>
            <person name="Tripp M."/>
            <person name="Chang C.H."/>
            <person name="Lee J.M."/>
            <person name="Toriumi M.J."/>
            <person name="Chan M.M."/>
            <person name="Tang C.C."/>
            <person name="Onodera C.S."/>
            <person name="Deng J.M."/>
            <person name="Akiyama K."/>
            <person name="Ansari Y."/>
            <person name="Arakawa T."/>
            <person name="Banh J."/>
            <person name="Banno F."/>
            <person name="Bowser L."/>
            <person name="Brooks S.Y."/>
            <person name="Carninci P."/>
            <person name="Chao Q."/>
            <person name="Choy N."/>
            <person name="Enju A."/>
            <person name="Goldsmith A.D."/>
            <person name="Gurjal M."/>
            <person name="Hansen N.F."/>
            <person name="Hayashizaki Y."/>
            <person name="Johnson-Hopson C."/>
            <person name="Hsuan V.W."/>
            <person name="Iida K."/>
            <person name="Karnes M."/>
            <person name="Khan S."/>
            <person name="Koesema E."/>
            <person name="Ishida J."/>
            <person name="Jiang P.X."/>
            <person name="Jones T."/>
            <person name="Kawai J."/>
            <person name="Kamiya A."/>
            <person name="Meyers C."/>
            <person name="Nakajima M."/>
            <person name="Narusaka M."/>
            <person name="Seki M."/>
            <person name="Sakurai T."/>
            <person name="Satou M."/>
            <person name="Tamse R."/>
            <person name="Vaysberg M."/>
            <person name="Wallender E.K."/>
            <person name="Wong C."/>
            <person name="Yamamura Y."/>
            <person name="Yuan S."/>
            <person name="Shinozaki K."/>
            <person name="Davis R.W."/>
            <person name="Theologis A."/>
            <person name="Ecker J.R."/>
        </authorList>
    </citation>
    <scope>NUCLEOTIDE SEQUENCE [LARGE SCALE MRNA]</scope>
    <source>
        <strain>cv. Columbia</strain>
    </source>
</reference>
<reference key="5">
    <citation type="submission" date="2002-03" db="EMBL/GenBank/DDBJ databases">
        <title>Full-length cDNA from Arabidopsis thaliana.</title>
        <authorList>
            <person name="Brover V.V."/>
            <person name="Troukhan M.E."/>
            <person name="Alexandrov N.A."/>
            <person name="Lu Y.-P."/>
            <person name="Flavell R.B."/>
            <person name="Feldmann K.A."/>
        </authorList>
    </citation>
    <scope>NUCLEOTIDE SEQUENCE [LARGE SCALE MRNA]</scope>
</reference>
<reference key="6">
    <citation type="journal article" date="2002" name="Plant Sci.">
        <title>Comparative analysis of PSK peptide growth factor precursor homologs.</title>
        <authorList>
            <person name="Lorbiecke R."/>
            <person name="Sauter M.M."/>
        </authorList>
    </citation>
    <scope>IDENTIFICATION</scope>
</reference>
<reference key="7">
    <citation type="journal article" date="2006" name="Plant Physiol.">
        <title>Disruption and overexpression of Arabidopsis phytosulfokine receptor gene affects cellular longevity and potential for growth.</title>
        <authorList>
            <person name="Matsubayashi Y."/>
            <person name="Ogawa M."/>
            <person name="Kihara H."/>
            <person name="Niwa M."/>
            <person name="Sakagami Y."/>
        </authorList>
    </citation>
    <scope>TISSUE SPECIFICITY</scope>
</reference>
<reference key="8">
    <citation type="journal article" date="2010" name="Physiol. Plantarum">
        <title>A role for PSK signaling in wounding and microbial interactions in Arabidopsis.</title>
        <authorList>
            <person name="Loivamaki M."/>
            <person name="Stuhrwohldt N."/>
            <person name="Deeken R."/>
            <person name="Steffens B."/>
            <person name="Roitsch T."/>
            <person name="Hedrich R."/>
            <person name="Sauter M."/>
        </authorList>
    </citation>
    <scope>INDUCTION BY FUNGAL INFECTION AND WOUNDING</scope>
</reference>
<reference key="9">
    <citation type="journal article" date="2013" name="Science">
        <title>ERF115 controls root quiescent center cell division and stem cell replenishment.</title>
        <authorList>
            <person name="Heyman J."/>
            <person name="Cools T."/>
            <person name="Vandenbussche F."/>
            <person name="Heyndrickx K.S."/>
            <person name="Van Leene J."/>
            <person name="Vercauteren I."/>
            <person name="Vanderauwera S."/>
            <person name="Vandepoele K."/>
            <person name="De Jaeger G."/>
            <person name="Van Der Straeten D."/>
            <person name="De Veylder L."/>
        </authorList>
    </citation>
    <scope>INDUCTION</scope>
</reference>
<accession>Q9FEB4</accession>
<accession>Q7PCB7</accession>
<organism>
    <name type="scientific">Arabidopsis thaliana</name>
    <name type="common">Mouse-ear cress</name>
    <dbReference type="NCBI Taxonomy" id="3702"/>
    <lineage>
        <taxon>Eukaryota</taxon>
        <taxon>Viridiplantae</taxon>
        <taxon>Streptophyta</taxon>
        <taxon>Embryophyta</taxon>
        <taxon>Tracheophyta</taxon>
        <taxon>Spermatophyta</taxon>
        <taxon>Magnoliopsida</taxon>
        <taxon>eudicotyledons</taxon>
        <taxon>Gunneridae</taxon>
        <taxon>Pentapetalae</taxon>
        <taxon>rosids</taxon>
        <taxon>malvids</taxon>
        <taxon>Brassicales</taxon>
        <taxon>Brassicaceae</taxon>
        <taxon>Camelineae</taxon>
        <taxon>Arabidopsis</taxon>
    </lineage>
</organism>
<sequence>MVKFTTFLCIIALLLCSTLTHASARLNPTSVYPEENSFKKLEQGEVICEGVGEEECFLIRRTLVAHTDYIYTQNHNP</sequence>
<feature type="signal peptide" evidence="2">
    <location>
        <begin position="1"/>
        <end position="24"/>
    </location>
</feature>
<feature type="propeptide" id="PRO_0000024097" evidence="2">
    <location>
        <begin position="25"/>
        <end position="68"/>
    </location>
</feature>
<feature type="peptide" id="PRO_0000024098" description="Phytosulfokine-alpha" evidence="1">
    <location>
        <begin position="69"/>
        <end position="73"/>
    </location>
</feature>
<feature type="peptide" id="PRO_0000024099" description="Phytosulfokine-beta" evidence="1">
    <location>
        <begin position="69"/>
        <end position="72"/>
    </location>
</feature>
<feature type="propeptide" id="PRO_0000024100" evidence="2">
    <location>
        <begin position="74"/>
        <end position="77"/>
    </location>
</feature>
<feature type="modified residue" description="Sulfotyrosine" evidence="1">
    <location>
        <position position="69"/>
    </location>
</feature>
<feature type="modified residue" description="Sulfotyrosine" evidence="1">
    <location>
        <position position="71"/>
    </location>
</feature>
<comment type="function">
    <text evidence="1">Promotes plant cell differentiation, organogenesis and somatic embryogenesis as well as cell proliferation (By similarity). May be involved in the low quiescent center cell proliferation.</text>
</comment>
<comment type="subcellular location">
    <subcellularLocation>
        <location evidence="1">Secreted</location>
    </subcellularLocation>
</comment>
<comment type="tissue specificity">
    <text evidence="3">Expressed in stems, roots, mature leaves and flowers. Most abundant in vascular bundles.</text>
</comment>
<comment type="induction">
    <text evidence="4 5">Up-regulated by ERF115, by brassinosteroid treatment, wounding and fungal infection.</text>
</comment>
<comment type="PTM">
    <text evidence="1">Sulfation is important for activity and for the binding to a putative membrane receptor.</text>
</comment>
<comment type="PTM">
    <text evidence="1">PSK-beta is an enzymatic derivative of PSK-alpha.</text>
</comment>
<comment type="similarity">
    <text evidence="6">Belongs to the phytosulfokine family.</text>
</comment>